<comment type="function">
    <text evidence="1">Plays critical roles in virus replication, from virus entry and uncoating to assembly and budding of the virus particle. M1 binding to ribonucleocapsids (RNPs) in nucleus seems to inhibit viral transcription. Interaction of viral NEP with M1-RNP is thought to promote nuclear export of the complex, which is targeted to the virion assembly site at the apical plasma membrane in polarized epithelial cells. Interactions with NA and HA may bring M1, a non-raft-associated protein, into lipid rafts. Forms a continuous shell on the inner side of the lipid bilayer in virion, where it binds the RNP. During virus entry into cell, the M2 ion channel acidifies the internal virion core, inducing M1 dissociation from the RNP. M1-free RNPs are transported to the nucleus, where viral transcription and replication can take place.</text>
</comment>
<comment type="function">
    <text evidence="1">Determines the virion's shape: spherical or filamentous. Clinical isolates of influenza are characterized by the presence of significant proportion of filamentous virions, whereas after multiple passage on eggs or cell culture, virions have only spherical morphology. Filamentous virions are thought to be important to infect neighboring cells, and spherical virions more suited to spread through aerosol between hosts organisms.</text>
</comment>
<comment type="subunit">
    <text evidence="1">Homodimer and homomultimer. Interacts with NEP. Binds ribonucleocapsid by both interacting with genomic RNA and NP protein. May interact with HA and NA. Cannot bind NP without genomic RNA.</text>
</comment>
<comment type="subcellular location">
    <subcellularLocation>
        <location evidence="1">Virion membrane</location>
        <topology evidence="1">Peripheral membrane protein</topology>
        <orientation evidence="1">Cytoplasmic side</orientation>
    </subcellularLocation>
    <subcellularLocation>
        <location evidence="1">Host nucleus</location>
    </subcellularLocation>
</comment>
<comment type="alternative products">
    <event type="alternative splicing"/>
    <isoform>
        <id>Q0A457-1</id>
        <name>M1</name>
        <sequence type="displayed"/>
    </isoform>
    <isoform>
        <id>Q0A458-1</id>
        <name>M2</name>
        <sequence type="external"/>
    </isoform>
    <text>Only the first 9 residues are shared by the 2 isoforms.</text>
</comment>
<comment type="miscellaneous">
    <text evidence="1">Most abundant protein in virion. When expressed alone can form virus-like particles in transfected cells.</text>
</comment>
<comment type="similarity">
    <text evidence="1">Belongs to the influenza viruses Matrix protein M1 family.</text>
</comment>
<feature type="chain" id="PRO_0000326285" description="Matrix protein 1">
    <location>
        <begin position="1"/>
        <end position="252"/>
    </location>
</feature>
<feature type="region of interest" description="Membrane-binding" evidence="1">
    <location>
        <begin position="1"/>
        <end position="164"/>
    </location>
</feature>
<feature type="region of interest" description="RNP-binding" evidence="1">
    <location>
        <begin position="165"/>
        <end position="252"/>
    </location>
</feature>
<feature type="short sequence motif" description="Nuclear localization signal" evidence="1">
    <location>
        <begin position="101"/>
        <end position="105"/>
    </location>
</feature>
<organism>
    <name type="scientific">Influenza A virus (strain A/Turkey/Wisconsin/1/1966 H9N2)</name>
    <dbReference type="NCBI Taxonomy" id="385620"/>
    <lineage>
        <taxon>Viruses</taxon>
        <taxon>Riboviria</taxon>
        <taxon>Orthornavirae</taxon>
        <taxon>Negarnaviricota</taxon>
        <taxon>Polyploviricotina</taxon>
        <taxon>Insthoviricetes</taxon>
        <taxon>Articulavirales</taxon>
        <taxon>Orthomyxoviridae</taxon>
        <taxon>Alphainfluenzavirus</taxon>
        <taxon>Alphainfluenzavirus influenzae</taxon>
        <taxon>Influenza A virus</taxon>
    </lineage>
</organism>
<accession>Q0A457</accession>
<accession>Q3SBF4</accession>
<sequence>MSLLTEVETYVLSIVPSGPLKAEIAQRLEDVFAGKNTDLEALMEWLKTRPILSPLTKGILGFVFTLTVPSERGLQRRRFVQNALNGNGDPNNMDRAVKLYRKLKREITFHGAKEVALSYSTGALASCMGLIYNRMGTVTTEVAFGLVCATCEQIADSQHRSHRQMVTTTNPLIRHENRMVLASTTAKAMEQMAGSSEQAAEAMEVASQARQMVQAMRTIGTHPSSSAGLKDDLLENLQAYQKRMGVQMQRFK</sequence>
<evidence type="ECO:0000255" key="1">
    <source>
        <dbReference type="HAMAP-Rule" id="MF_04068"/>
    </source>
</evidence>
<protein>
    <recommendedName>
        <fullName evidence="1">Matrix protein 1</fullName>
        <shortName evidence="1">M1</shortName>
    </recommendedName>
</protein>
<gene>
    <name evidence="1" type="primary">M</name>
</gene>
<name>M1_I66A1</name>
<dbReference type="EMBL" id="CY014664">
    <property type="protein sequence ID" value="ABI84524.1"/>
    <property type="molecule type" value="Genomic_RNA"/>
</dbReference>
<dbReference type="EMBL" id="DQ067438">
    <property type="protein sequence ID" value="AAY52574.1"/>
    <property type="molecule type" value="Genomic_RNA"/>
</dbReference>
<dbReference type="SMR" id="Q0A457"/>
<dbReference type="Proteomes" id="UP000115522">
    <property type="component" value="Genome"/>
</dbReference>
<dbReference type="GO" id="GO:0042025">
    <property type="term" value="C:host cell nucleus"/>
    <property type="evidence" value="ECO:0007669"/>
    <property type="project" value="UniProtKB-SubCell"/>
</dbReference>
<dbReference type="GO" id="GO:0016020">
    <property type="term" value="C:membrane"/>
    <property type="evidence" value="ECO:0007669"/>
    <property type="project" value="UniProtKB-KW"/>
</dbReference>
<dbReference type="GO" id="GO:0055036">
    <property type="term" value="C:virion membrane"/>
    <property type="evidence" value="ECO:0007669"/>
    <property type="project" value="UniProtKB-SubCell"/>
</dbReference>
<dbReference type="GO" id="GO:0003723">
    <property type="term" value="F:RNA binding"/>
    <property type="evidence" value="ECO:0007669"/>
    <property type="project" value="UniProtKB-UniRule"/>
</dbReference>
<dbReference type="GO" id="GO:0039660">
    <property type="term" value="F:structural constituent of virion"/>
    <property type="evidence" value="ECO:0007669"/>
    <property type="project" value="UniProtKB-UniRule"/>
</dbReference>
<dbReference type="GO" id="GO:0046761">
    <property type="term" value="P:viral budding from plasma membrane"/>
    <property type="evidence" value="ECO:0007669"/>
    <property type="project" value="UniProtKB-UniRule"/>
</dbReference>
<dbReference type="FunFam" id="1.10.10.180:FF:000001">
    <property type="entry name" value="Matrix protein 1"/>
    <property type="match status" value="1"/>
</dbReference>
<dbReference type="FunFam" id="1.20.91.10:FF:000001">
    <property type="entry name" value="Matrix protein 1"/>
    <property type="match status" value="1"/>
</dbReference>
<dbReference type="Gene3D" id="1.10.10.180">
    <property type="match status" value="1"/>
</dbReference>
<dbReference type="Gene3D" id="1.20.91.10">
    <property type="match status" value="1"/>
</dbReference>
<dbReference type="HAMAP" id="MF_04068">
    <property type="entry name" value="INFV_M1"/>
    <property type="match status" value="1"/>
</dbReference>
<dbReference type="InterPro" id="IPR036039">
    <property type="entry name" value="Flu_matrix_M1"/>
</dbReference>
<dbReference type="InterPro" id="IPR013188">
    <property type="entry name" value="Flu_matrix_M1_C"/>
</dbReference>
<dbReference type="InterPro" id="IPR001561">
    <property type="entry name" value="Flu_matrix_M1_N"/>
</dbReference>
<dbReference type="InterPro" id="IPR015423">
    <property type="entry name" value="Flu_matrix_M1_N_sub1"/>
</dbReference>
<dbReference type="InterPro" id="IPR015799">
    <property type="entry name" value="Flu_matrix_M1_N_sub2"/>
</dbReference>
<dbReference type="InterPro" id="IPR037533">
    <property type="entry name" value="INFV_M1"/>
</dbReference>
<dbReference type="Pfam" id="PF00598">
    <property type="entry name" value="Flu_M1"/>
    <property type="match status" value="1"/>
</dbReference>
<dbReference type="Pfam" id="PF08289">
    <property type="entry name" value="Flu_M1_C"/>
    <property type="match status" value="1"/>
</dbReference>
<dbReference type="SMART" id="SM00759">
    <property type="entry name" value="Flu_M1_C"/>
    <property type="match status" value="1"/>
</dbReference>
<dbReference type="SUPFAM" id="SSF48145">
    <property type="entry name" value="Influenza virus matrix protein M1"/>
    <property type="match status" value="1"/>
</dbReference>
<reference key="1">
    <citation type="journal article" date="2005" name="Virology">
        <title>Evolution of H9N2 influenza viruses from domestic poultry in Mainland China.</title>
        <authorList>
            <person name="Li C."/>
            <person name="Yu K."/>
            <person name="Tian G."/>
            <person name="Yu D."/>
            <person name="Liu L."/>
            <person name="Jing B."/>
            <person name="Ping J."/>
            <person name="Chen H."/>
        </authorList>
    </citation>
    <scope>NUCLEOTIDE SEQUENCE [GENOMIC RNA]</scope>
</reference>
<reference key="2">
    <citation type="journal article" date="2006" name="Science">
        <title>Large-scale sequence analysis of avian influenza isolates.</title>
        <authorList>
            <person name="Obenauer J.C."/>
            <person name="Denson J."/>
            <person name="Mehta P.K."/>
            <person name="Su X."/>
            <person name="Mukatira S."/>
            <person name="Finkelstein D.B."/>
            <person name="Xu X."/>
            <person name="Wang J."/>
            <person name="Ma J."/>
            <person name="Fan Y."/>
            <person name="Rakestraw K.M."/>
            <person name="Webster R.G."/>
            <person name="Hoffmann E."/>
            <person name="Krauss S."/>
            <person name="Zheng J."/>
            <person name="Zhang Z."/>
            <person name="Naeve C.W."/>
        </authorList>
    </citation>
    <scope>NUCLEOTIDE SEQUENCE [GENOMIC RNA]</scope>
</reference>
<proteinExistence type="inferred from homology"/>
<organismHost>
    <name type="scientific">Aves</name>
    <dbReference type="NCBI Taxonomy" id="8782"/>
</organismHost>
<keyword id="KW-0025">Alternative splicing</keyword>
<keyword id="KW-1048">Host nucleus</keyword>
<keyword id="KW-0472">Membrane</keyword>
<keyword id="KW-0694">RNA-binding</keyword>
<keyword id="KW-0468">Viral matrix protein</keyword>
<keyword id="KW-0946">Virion</keyword>